<accession>Q8NVI1</accession>
<organism>
    <name type="scientific">Staphylococcus aureus (strain MW2)</name>
    <dbReference type="NCBI Taxonomy" id="196620"/>
    <lineage>
        <taxon>Bacteria</taxon>
        <taxon>Bacillati</taxon>
        <taxon>Bacillota</taxon>
        <taxon>Bacilli</taxon>
        <taxon>Bacillales</taxon>
        <taxon>Staphylococcaceae</taxon>
        <taxon>Staphylococcus</taxon>
    </lineage>
</organism>
<gene>
    <name evidence="1" type="primary">kdpA</name>
    <name type="ordered locus">MW2001</name>
</gene>
<sequence>MEIILFLTMMVMITYVFSGYLYRVALVQSSRVDLIFTRFENMCFKIIGTDLEHMSAKTYVKHFLAFNGFMGFITFVLLIVQQWLFLNPNHNLNQSIDLAFNTAISFLTNSNLQHYNGESDVTYLTQMIVMTYLMFTSSASGYAVCIAMLRRLTGLTNIIGNFYQDIVRFIVRVLLPLSCLISILLMTQGVPQTLHANLMIRTLSGHIQHIAFGPIASLESIKHLGTNGGGFLAGNSATPFENPNIWSNFIEMGSMMLLPMSMLFLFGRMLSRHGKRVHRHALILFVAMFFIFIAILTLTMWSEYRGNPILANLGIYGPNMEGKEVRFGAGLSALFTVITTAFTTGSVNNMHDSLTPLGGLGPMVLMMLNVVFGGEGVGLMNLLIYVLLTVFICSLMVGKTPEYLNMPIGAREMKCIVLVFLIHPILILVFSALAFMIPGASESITNPSFHGISQVMYEMTSAAANNGSGFEGLKDDTTFWNISTGIIMLLSRYIPIILQLMIASSLVNKKSYHQDKYTIAIDKPYFGVSLIVFIVLLSGLTFIPVLLLGPIGEFLTLK</sequence>
<reference key="1">
    <citation type="journal article" date="2002" name="Lancet">
        <title>Genome and virulence determinants of high virulence community-acquired MRSA.</title>
        <authorList>
            <person name="Baba T."/>
            <person name="Takeuchi F."/>
            <person name="Kuroda M."/>
            <person name="Yuzawa H."/>
            <person name="Aoki K."/>
            <person name="Oguchi A."/>
            <person name="Nagai Y."/>
            <person name="Iwama N."/>
            <person name="Asano K."/>
            <person name="Naimi T."/>
            <person name="Kuroda H."/>
            <person name="Cui L."/>
            <person name="Yamamoto K."/>
            <person name="Hiramatsu K."/>
        </authorList>
    </citation>
    <scope>NUCLEOTIDE SEQUENCE [LARGE SCALE GENOMIC DNA]</scope>
    <source>
        <strain>MW2</strain>
    </source>
</reference>
<evidence type="ECO:0000255" key="1">
    <source>
        <dbReference type="HAMAP-Rule" id="MF_00275"/>
    </source>
</evidence>
<proteinExistence type="inferred from homology"/>
<dbReference type="EMBL" id="BA000033">
    <property type="protein sequence ID" value="BAB95866.1"/>
    <property type="molecule type" value="Genomic_DNA"/>
</dbReference>
<dbReference type="RefSeq" id="WP_000402658.1">
    <property type="nucleotide sequence ID" value="NC_003923.1"/>
</dbReference>
<dbReference type="SMR" id="Q8NVI1"/>
<dbReference type="KEGG" id="sam:MW2001"/>
<dbReference type="HOGENOM" id="CLU_018614_3_0_9"/>
<dbReference type="GO" id="GO:0005886">
    <property type="term" value="C:plasma membrane"/>
    <property type="evidence" value="ECO:0007669"/>
    <property type="project" value="UniProtKB-SubCell"/>
</dbReference>
<dbReference type="GO" id="GO:0008556">
    <property type="term" value="F:P-type potassium transmembrane transporter activity"/>
    <property type="evidence" value="ECO:0007669"/>
    <property type="project" value="InterPro"/>
</dbReference>
<dbReference type="GO" id="GO:0030955">
    <property type="term" value="F:potassium ion binding"/>
    <property type="evidence" value="ECO:0007669"/>
    <property type="project" value="UniProtKB-UniRule"/>
</dbReference>
<dbReference type="HAMAP" id="MF_00275">
    <property type="entry name" value="KdpA"/>
    <property type="match status" value="1"/>
</dbReference>
<dbReference type="InterPro" id="IPR004623">
    <property type="entry name" value="KdpA"/>
</dbReference>
<dbReference type="NCBIfam" id="TIGR00680">
    <property type="entry name" value="kdpA"/>
    <property type="match status" value="1"/>
</dbReference>
<dbReference type="PANTHER" id="PTHR30607">
    <property type="entry name" value="POTASSIUM-TRANSPORTING ATPASE A CHAIN"/>
    <property type="match status" value="1"/>
</dbReference>
<dbReference type="PANTHER" id="PTHR30607:SF2">
    <property type="entry name" value="POTASSIUM-TRANSPORTING ATPASE POTASSIUM-BINDING SUBUNIT"/>
    <property type="match status" value="1"/>
</dbReference>
<dbReference type="Pfam" id="PF03814">
    <property type="entry name" value="KdpA"/>
    <property type="match status" value="1"/>
</dbReference>
<dbReference type="PIRSF" id="PIRSF001294">
    <property type="entry name" value="K_ATPaseA"/>
    <property type="match status" value="1"/>
</dbReference>
<keyword id="KW-1003">Cell membrane</keyword>
<keyword id="KW-0406">Ion transport</keyword>
<keyword id="KW-0472">Membrane</keyword>
<keyword id="KW-0630">Potassium</keyword>
<keyword id="KW-0633">Potassium transport</keyword>
<keyword id="KW-0812">Transmembrane</keyword>
<keyword id="KW-1133">Transmembrane helix</keyword>
<keyword id="KW-0813">Transport</keyword>
<protein>
    <recommendedName>
        <fullName evidence="1">Potassium-transporting ATPase potassium-binding subunit</fullName>
    </recommendedName>
    <alternativeName>
        <fullName evidence="1">ATP phosphohydrolase [potassium-transporting] A chain</fullName>
    </alternativeName>
    <alternativeName>
        <fullName evidence="1">Potassium-binding and translocating subunit A</fullName>
    </alternativeName>
    <alternativeName>
        <fullName evidence="1">Potassium-translocating ATPase A chain</fullName>
    </alternativeName>
</protein>
<comment type="function">
    <text evidence="1">Part of the high-affinity ATP-driven potassium transport (or Kdp) system, which catalyzes the hydrolysis of ATP coupled with the electrogenic transport of potassium into the cytoplasm. This subunit binds the extracellular potassium ions and delivers the ions to the membrane domain of KdpB through an intramembrane tunnel.</text>
</comment>
<comment type="subunit">
    <text evidence="1">The system is composed of three essential subunits: KdpA, KdpB and KdpC.</text>
</comment>
<comment type="subcellular location">
    <subcellularLocation>
        <location evidence="1">Cell membrane</location>
        <topology evidence="1">Multi-pass membrane protein</topology>
    </subcellularLocation>
</comment>
<comment type="similarity">
    <text evidence="1">Belongs to the KdpA family.</text>
</comment>
<name>KDPA_STAAW</name>
<feature type="chain" id="PRO_0000166533" description="Potassium-transporting ATPase potassium-binding subunit">
    <location>
        <begin position="1"/>
        <end position="558"/>
    </location>
</feature>
<feature type="transmembrane region" description="Helical" evidence="1">
    <location>
        <begin position="1"/>
        <end position="21"/>
    </location>
</feature>
<feature type="transmembrane region" description="Helical" evidence="1">
    <location>
        <begin position="66"/>
        <end position="86"/>
    </location>
</feature>
<feature type="transmembrane region" description="Helical" evidence="1">
    <location>
        <begin position="127"/>
        <end position="147"/>
    </location>
</feature>
<feature type="transmembrane region" description="Helical" evidence="1">
    <location>
        <begin position="166"/>
        <end position="186"/>
    </location>
</feature>
<feature type="transmembrane region" description="Helical" evidence="1">
    <location>
        <begin position="245"/>
        <end position="265"/>
    </location>
</feature>
<feature type="transmembrane region" description="Helical" evidence="1">
    <location>
        <begin position="281"/>
        <end position="301"/>
    </location>
</feature>
<feature type="transmembrane region" description="Helical" evidence="1">
    <location>
        <begin position="327"/>
        <end position="347"/>
    </location>
</feature>
<feature type="transmembrane region" description="Helical" evidence="1">
    <location>
        <begin position="354"/>
        <end position="374"/>
    </location>
</feature>
<feature type="transmembrane region" description="Helical" evidence="1">
    <location>
        <begin position="377"/>
        <end position="397"/>
    </location>
</feature>
<feature type="transmembrane region" description="Helical" evidence="1">
    <location>
        <begin position="416"/>
        <end position="436"/>
    </location>
</feature>
<feature type="transmembrane region" description="Helical" evidence="1">
    <location>
        <begin position="482"/>
        <end position="502"/>
    </location>
</feature>
<feature type="transmembrane region" description="Helical" evidence="1">
    <location>
        <begin position="531"/>
        <end position="551"/>
    </location>
</feature>